<reference key="1">
    <citation type="journal article" date="2008" name="Plant Cell">
        <title>Arabidopsis ELONGATED MITOCHONDRIA1 is required for localization of DYNAMIN-RELATED PROTEIN3A to mitochondrial fission sites.</title>
        <authorList>
            <person name="Arimura S."/>
            <person name="Fujimoto M."/>
            <person name="Doniwa Y."/>
            <person name="Kadoya N."/>
            <person name="Nakazono M."/>
            <person name="Sakamoto W."/>
            <person name="Tsutsumi N."/>
        </authorList>
    </citation>
    <scope>NUCLEOTIDE SEQUENCE [MRNA]</scope>
    <scope>FUNCTION</scope>
    <scope>INTERACTION WITH DRP3A AND DRP3B</scope>
    <scope>SUBCELLULAR LOCATION</scope>
    <scope>DISRUPTION PHENOTYPE</scope>
    <scope>MUTAGENESIS OF ARG-241; GLY-333 AND SER-352</scope>
</reference>
<reference key="2">
    <citation type="journal article" date="1997" name="DNA Res.">
        <title>Structural analysis of Arabidopsis thaliana chromosome 5. III. Sequence features of the regions of 1,191,918 bp covered by seventeen physically assigned P1 clones.</title>
        <authorList>
            <person name="Nakamura Y."/>
            <person name="Sato S."/>
            <person name="Kaneko T."/>
            <person name="Kotani H."/>
            <person name="Asamizu E."/>
            <person name="Miyajima N."/>
            <person name="Tabata S."/>
        </authorList>
    </citation>
    <scope>NUCLEOTIDE SEQUENCE [LARGE SCALE GENOMIC DNA]</scope>
    <source>
        <strain>cv. Columbia</strain>
    </source>
</reference>
<reference key="3">
    <citation type="journal article" date="2017" name="Plant J.">
        <title>Araport11: a complete reannotation of the Arabidopsis thaliana reference genome.</title>
        <authorList>
            <person name="Cheng C.Y."/>
            <person name="Krishnakumar V."/>
            <person name="Chan A.P."/>
            <person name="Thibaud-Nissen F."/>
            <person name="Schobel S."/>
            <person name="Town C.D."/>
        </authorList>
    </citation>
    <scope>GENOME REANNOTATION</scope>
    <source>
        <strain>cv. Columbia</strain>
    </source>
</reference>
<reference key="4">
    <citation type="journal article" date="2003" name="Science">
        <title>Empirical analysis of transcriptional activity in the Arabidopsis genome.</title>
        <authorList>
            <person name="Yamada K."/>
            <person name="Lim J."/>
            <person name="Dale J.M."/>
            <person name="Chen H."/>
            <person name="Shinn P."/>
            <person name="Palm C.J."/>
            <person name="Southwick A.M."/>
            <person name="Wu H.C."/>
            <person name="Kim C.J."/>
            <person name="Nguyen M."/>
            <person name="Pham P.K."/>
            <person name="Cheuk R.F."/>
            <person name="Karlin-Newmann G."/>
            <person name="Liu S.X."/>
            <person name="Lam B."/>
            <person name="Sakano H."/>
            <person name="Wu T."/>
            <person name="Yu G."/>
            <person name="Miranda M."/>
            <person name="Quach H.L."/>
            <person name="Tripp M."/>
            <person name="Chang C.H."/>
            <person name="Lee J.M."/>
            <person name="Toriumi M.J."/>
            <person name="Chan M.M."/>
            <person name="Tang C.C."/>
            <person name="Onodera C.S."/>
            <person name="Deng J.M."/>
            <person name="Akiyama K."/>
            <person name="Ansari Y."/>
            <person name="Arakawa T."/>
            <person name="Banh J."/>
            <person name="Banno F."/>
            <person name="Bowser L."/>
            <person name="Brooks S.Y."/>
            <person name="Carninci P."/>
            <person name="Chao Q."/>
            <person name="Choy N."/>
            <person name="Enju A."/>
            <person name="Goldsmith A.D."/>
            <person name="Gurjal M."/>
            <person name="Hansen N.F."/>
            <person name="Hayashizaki Y."/>
            <person name="Johnson-Hopson C."/>
            <person name="Hsuan V.W."/>
            <person name="Iida K."/>
            <person name="Karnes M."/>
            <person name="Khan S."/>
            <person name="Koesema E."/>
            <person name="Ishida J."/>
            <person name="Jiang P.X."/>
            <person name="Jones T."/>
            <person name="Kawai J."/>
            <person name="Kamiya A."/>
            <person name="Meyers C."/>
            <person name="Nakajima M."/>
            <person name="Narusaka M."/>
            <person name="Seki M."/>
            <person name="Sakurai T."/>
            <person name="Satou M."/>
            <person name="Tamse R."/>
            <person name="Vaysberg M."/>
            <person name="Wallender E.K."/>
            <person name="Wong C."/>
            <person name="Yamamura Y."/>
            <person name="Yuan S."/>
            <person name="Shinozaki K."/>
            <person name="Davis R.W."/>
            <person name="Theologis A."/>
            <person name="Ecker J.R."/>
        </authorList>
    </citation>
    <scope>NUCLEOTIDE SEQUENCE [LARGE SCALE MRNA]</scope>
    <source>
        <strain>cv. Columbia</strain>
    </source>
</reference>
<name>ELM1_ARATH</name>
<proteinExistence type="evidence at protein level"/>
<sequence length="427" mass="47605">MRPILLPDPPSLSTGVPDIFEQGGSHNVVRRAVVIGNGFPGSENQCIGLVRALGLSDNHLLYRVTRPKGGLNEWLHWLPVGFHKKLDFILRHIYLYSRLMLGSKQSKYISSVPSENGGNVGLASILEADVKGIVNLARQTYEKDGPLIVIACGRDTISIASSIRRLASENVFVVQIQHPRSHLNRFDMVITPRHDYYPLTLEAQEQVPRFMRSWITPREPPQDHVVLTTGALHQIDYASLRKAASAWHDEFAALPKPLVVVNIGWPRSNCRYGADLAKQLTDSLLNVLATCGSVRITLSYKTPAKVSRVIFKELGDNPKVYIWNGQEPNPYMGHLAWGDAFVVTADSVSLISEACSTGKPVYVVGADHCKWKIAEFQKSLRERGVVRSFTGFEDMSESWSYPPLNDTAEAATRIRRELAARGWSLRS</sequence>
<gene>
    <name type="primary">ELM1</name>
    <name type="ordered locus">At5g22350</name>
    <name type="ORF">MWD9.14</name>
</gene>
<dbReference type="EMBL" id="AB379589">
    <property type="protein sequence ID" value="BAG66280.1"/>
    <property type="molecule type" value="mRNA"/>
</dbReference>
<dbReference type="EMBL" id="AB007651">
    <property type="protein sequence ID" value="BAB08333.1"/>
    <property type="status" value="ALT_SEQ"/>
    <property type="molecule type" value="Genomic_DNA"/>
</dbReference>
<dbReference type="EMBL" id="CP002688">
    <property type="protein sequence ID" value="AED93015.1"/>
    <property type="molecule type" value="Genomic_DNA"/>
</dbReference>
<dbReference type="EMBL" id="AY059915">
    <property type="protein sequence ID" value="AAL24397.1"/>
    <property type="molecule type" value="mRNA"/>
</dbReference>
<dbReference type="EMBL" id="AY128808">
    <property type="protein sequence ID" value="AAM91208.1"/>
    <property type="molecule type" value="mRNA"/>
</dbReference>
<dbReference type="RefSeq" id="NP_568417.1">
    <property type="nucleotide sequence ID" value="NM_122140.4"/>
</dbReference>
<dbReference type="FunCoup" id="Q93YN4">
    <property type="interactions" value="280"/>
</dbReference>
<dbReference type="STRING" id="3702.Q93YN4"/>
<dbReference type="PaxDb" id="3702-AT5G22350.1"/>
<dbReference type="ProteomicsDB" id="222262"/>
<dbReference type="EnsemblPlants" id="AT5G22350.1">
    <property type="protein sequence ID" value="AT5G22350.1"/>
    <property type="gene ID" value="AT5G22350"/>
</dbReference>
<dbReference type="GeneID" id="832295"/>
<dbReference type="Gramene" id="AT5G22350.1">
    <property type="protein sequence ID" value="AT5G22350.1"/>
    <property type="gene ID" value="AT5G22350"/>
</dbReference>
<dbReference type="KEGG" id="ath:AT5G22350"/>
<dbReference type="Araport" id="AT5G22350"/>
<dbReference type="TAIR" id="AT5G22350">
    <property type="gene designation" value="ELM1"/>
</dbReference>
<dbReference type="eggNOG" id="ENOG502QSHX">
    <property type="taxonomic scope" value="Eukaryota"/>
</dbReference>
<dbReference type="HOGENOM" id="CLU_048241_2_0_1"/>
<dbReference type="InParanoid" id="Q93YN4"/>
<dbReference type="OMA" id="YIWNGQE"/>
<dbReference type="OrthoDB" id="1856981at2759"/>
<dbReference type="PhylomeDB" id="Q93YN4"/>
<dbReference type="PRO" id="PR:Q93YN4"/>
<dbReference type="Proteomes" id="UP000006548">
    <property type="component" value="Chromosome 5"/>
</dbReference>
<dbReference type="ExpressionAtlas" id="Q93YN4">
    <property type="expression patterns" value="baseline and differential"/>
</dbReference>
<dbReference type="GO" id="GO:0005829">
    <property type="term" value="C:cytosol"/>
    <property type="evidence" value="ECO:0007005"/>
    <property type="project" value="TAIR"/>
</dbReference>
<dbReference type="GO" id="GO:0005741">
    <property type="term" value="C:mitochondrial outer membrane"/>
    <property type="evidence" value="ECO:0000314"/>
    <property type="project" value="TAIR"/>
</dbReference>
<dbReference type="GO" id="GO:0000266">
    <property type="term" value="P:mitochondrial fission"/>
    <property type="evidence" value="ECO:0000315"/>
    <property type="project" value="TAIR"/>
</dbReference>
<dbReference type="GO" id="GO:0033365">
    <property type="term" value="P:protein localization to organelle"/>
    <property type="evidence" value="ECO:0000315"/>
    <property type="project" value="TAIR"/>
</dbReference>
<dbReference type="InterPro" id="IPR009367">
    <property type="entry name" value="Elm1-like"/>
</dbReference>
<dbReference type="PANTHER" id="PTHR33986:SF2">
    <property type="entry name" value="MITOCHONDRIAL FISSION PROTEIN ELM1"/>
    <property type="match status" value="1"/>
</dbReference>
<dbReference type="PANTHER" id="PTHR33986">
    <property type="entry name" value="OS02G0535700 PROTEIN"/>
    <property type="match status" value="1"/>
</dbReference>
<dbReference type="Pfam" id="PF06258">
    <property type="entry name" value="Mito_fiss_Elm1"/>
    <property type="match status" value="1"/>
</dbReference>
<dbReference type="SUPFAM" id="SSF53756">
    <property type="entry name" value="UDP-Glycosyltransferase/glycogen phosphorylase"/>
    <property type="match status" value="1"/>
</dbReference>
<organism>
    <name type="scientific">Arabidopsis thaliana</name>
    <name type="common">Mouse-ear cress</name>
    <dbReference type="NCBI Taxonomy" id="3702"/>
    <lineage>
        <taxon>Eukaryota</taxon>
        <taxon>Viridiplantae</taxon>
        <taxon>Streptophyta</taxon>
        <taxon>Embryophyta</taxon>
        <taxon>Tracheophyta</taxon>
        <taxon>Spermatophyta</taxon>
        <taxon>Magnoliopsida</taxon>
        <taxon>eudicotyledons</taxon>
        <taxon>Gunneridae</taxon>
        <taxon>Pentapetalae</taxon>
        <taxon>rosids</taxon>
        <taxon>malvids</taxon>
        <taxon>Brassicales</taxon>
        <taxon>Brassicaceae</taxon>
        <taxon>Camelineae</taxon>
        <taxon>Arabidopsis</taxon>
    </lineage>
</organism>
<evidence type="ECO:0000269" key="1">
    <source>
    </source>
</evidence>
<evidence type="ECO:0000305" key="2"/>
<evidence type="ECO:0000305" key="3">
    <source>
    </source>
</evidence>
<accession>Q93YN4</accession>
<accession>Q9FMR7</accession>
<comment type="function">
    <text evidence="1">Plant-specific factor involved in mitochondria fission. Is required for the correct localization of DRP3A from the cytosol to mitochondrial fission sites. Does not seem to be required for peroxisomal division.</text>
</comment>
<comment type="subunit">
    <text evidence="1">Interacts with DRP3 and DRP3B.</text>
</comment>
<comment type="subcellular location">
    <subcellularLocation>
        <location evidence="3">Mitochondrion outer membrane</location>
        <topology evidence="3">Peripheral membrane protein</topology>
    </subcellularLocation>
</comment>
<comment type="disruption phenotype">
    <text evidence="1">Reduced plant growth and early bolting. Elongated mitochondria and reduction of the number of mitochondria per cell.</text>
</comment>
<comment type="sequence caution" evidence="2">
    <conflict type="erroneous gene model prediction">
        <sequence resource="EMBL-CDS" id="BAB08333"/>
    </conflict>
</comment>
<keyword id="KW-0472">Membrane</keyword>
<keyword id="KW-0496">Mitochondrion</keyword>
<keyword id="KW-1000">Mitochondrion outer membrane</keyword>
<keyword id="KW-1185">Reference proteome</keyword>
<protein>
    <recommendedName>
        <fullName>Mitochondrial fission protein ELM1</fullName>
    </recommendedName>
    <alternativeName>
        <fullName>Protein ELONGATED MITOCHONDRIA 1</fullName>
    </alternativeName>
</protein>
<feature type="chain" id="PRO_0000422806" description="Mitochondrial fission protein ELM1">
    <location>
        <begin position="1"/>
        <end position="427"/>
    </location>
</feature>
<feature type="mutagenesis site" description="In elm1-2; intermediate mutant phenotype." evidence="1">
    <original>R</original>
    <variation>C</variation>
    <location>
        <position position="241"/>
    </location>
</feature>
<feature type="mutagenesis site" description="In elm1-3; intermediate mutant phenotype." evidence="1">
    <original>G</original>
    <variation>N</variation>
    <location>
        <position position="333"/>
    </location>
</feature>
<feature type="mutagenesis site" description="In elm1-5; weak mutant phenotype." evidence="1">
    <original>S</original>
    <variation>N</variation>
    <location>
        <position position="352"/>
    </location>
</feature>